<sequence length="109" mass="11850">MGSLIIEDLQESFGKEAVKGKEITVHYTGWLEDGTKFDSSLDRRQPLTITLGVGQVIKGWDEGFGGMKEGGKRKLTIPSEMGYGAHGAGGVIPPHATLIFEVELLKVYE</sequence>
<dbReference type="EC" id="5.2.1.8"/>
<dbReference type="EMBL" id="M19305">
    <property type="status" value="NOT_ANNOTATED_CDS"/>
    <property type="molecule type" value="Genomic_DNA"/>
</dbReference>
<dbReference type="SMR" id="P0A0W3"/>
<dbReference type="GO" id="GO:0003755">
    <property type="term" value="F:peptidyl-prolyl cis-trans isomerase activity"/>
    <property type="evidence" value="ECO:0007669"/>
    <property type="project" value="UniProtKB-KW"/>
</dbReference>
<dbReference type="GO" id="GO:0006457">
    <property type="term" value="P:protein folding"/>
    <property type="evidence" value="ECO:0007669"/>
    <property type="project" value="UniProtKB-ARBA"/>
</dbReference>
<dbReference type="FunFam" id="3.10.50.40:FF:000006">
    <property type="entry name" value="Peptidyl-prolyl cis-trans isomerase"/>
    <property type="match status" value="1"/>
</dbReference>
<dbReference type="Gene3D" id="3.10.50.40">
    <property type="match status" value="1"/>
</dbReference>
<dbReference type="InterPro" id="IPR046357">
    <property type="entry name" value="PPIase_dom_sf"/>
</dbReference>
<dbReference type="InterPro" id="IPR001179">
    <property type="entry name" value="PPIase_FKBP_dom"/>
</dbReference>
<dbReference type="PANTHER" id="PTHR43811:SF19">
    <property type="entry name" value="39 KDA FK506-BINDING NUCLEAR PROTEIN"/>
    <property type="match status" value="1"/>
</dbReference>
<dbReference type="PANTHER" id="PTHR43811">
    <property type="entry name" value="FKBP-TYPE PEPTIDYL-PROLYL CIS-TRANS ISOMERASE FKPA"/>
    <property type="match status" value="1"/>
</dbReference>
<dbReference type="Pfam" id="PF00254">
    <property type="entry name" value="FKBP_C"/>
    <property type="match status" value="1"/>
</dbReference>
<dbReference type="SUPFAM" id="SSF54534">
    <property type="entry name" value="FKBP-like"/>
    <property type="match status" value="1"/>
</dbReference>
<dbReference type="PROSITE" id="PS50059">
    <property type="entry name" value="FKBP_PPIASE"/>
    <property type="match status" value="1"/>
</dbReference>
<accession>P0A0W3</accession>
<accession>P25138</accession>
<reference key="1">
    <citation type="journal article" date="1988" name="J. Bacteriol.">
        <title>Neisseria meningitidis C114 contains silent, truncated pilin genes that are homologous to Neisseria gonorrhoeae pil sequences.</title>
        <authorList>
            <person name="Perry A.C.F."/>
            <person name="Nicolson I.J."/>
            <person name="Saunders J.R."/>
        </authorList>
    </citation>
    <scope>NUCLEOTIDE SEQUENCE [GENOMIC DNA]</scope>
    <source>
        <strain>C114 / Serogroup C / Serotype 2b</strain>
    </source>
</reference>
<keyword id="KW-0413">Isomerase</keyword>
<keyword id="KW-0697">Rotamase</keyword>
<feature type="chain" id="PRO_0000075352" description="FK506-binding protein">
    <location>
        <begin position="1"/>
        <end position="109"/>
    </location>
</feature>
<feature type="domain" description="PPIase FKBP-type" evidence="2">
    <location>
        <begin position="20"/>
        <end position="108"/>
    </location>
</feature>
<protein>
    <recommendedName>
        <fullName>FK506-binding protein</fullName>
        <ecNumber>5.2.1.8</ecNumber>
    </recommendedName>
    <alternativeName>
        <fullName>Peptidyl-prolyl cis-trans isomerase</fullName>
        <shortName>PPIase</shortName>
    </alternativeName>
    <alternativeName>
        <fullName>Rotamase</fullName>
    </alternativeName>
</protein>
<name>FKBP_NEIMC</name>
<gene>
    <name type="primary">fbp</name>
</gene>
<organism>
    <name type="scientific">Neisseria meningitidis serogroup C</name>
    <dbReference type="NCBI Taxonomy" id="135720"/>
    <lineage>
        <taxon>Bacteria</taxon>
        <taxon>Pseudomonadati</taxon>
        <taxon>Pseudomonadota</taxon>
        <taxon>Betaproteobacteria</taxon>
        <taxon>Neisseriales</taxon>
        <taxon>Neisseriaceae</taxon>
        <taxon>Neisseria</taxon>
    </lineage>
</organism>
<comment type="function">
    <text evidence="1">PPIases accelerate the folding of proteins.</text>
</comment>
<comment type="catalytic activity">
    <reaction>
        <text>[protein]-peptidylproline (omega=180) = [protein]-peptidylproline (omega=0)</text>
        <dbReference type="Rhea" id="RHEA:16237"/>
        <dbReference type="Rhea" id="RHEA-COMP:10747"/>
        <dbReference type="Rhea" id="RHEA-COMP:10748"/>
        <dbReference type="ChEBI" id="CHEBI:83833"/>
        <dbReference type="ChEBI" id="CHEBI:83834"/>
        <dbReference type="EC" id="5.2.1.8"/>
    </reaction>
</comment>
<comment type="similarity">
    <text evidence="3">Belongs to the FKBP-type PPIase family.</text>
</comment>
<comment type="sequence caution" evidence="3">
    <conflict type="frameshift">
        <sequence resource="EMBL" id="M19305"/>
    </conflict>
</comment>
<evidence type="ECO:0000250" key="1"/>
<evidence type="ECO:0000255" key="2">
    <source>
        <dbReference type="PROSITE-ProRule" id="PRU00277"/>
    </source>
</evidence>
<evidence type="ECO:0000305" key="3"/>
<proteinExistence type="inferred from homology"/>